<reference key="1">
    <citation type="journal article" date="1988" name="Agric. Biol. Chem.">
        <title>Nucleotide sequence of the secretable acid protease gene PEPI in the yeast Saccharomycopsis fibuligera.</title>
        <authorList>
            <person name="Hirata D."/>
            <person name="Fukui S."/>
            <person name="Yamashita I."/>
        </authorList>
    </citation>
    <scope>NUCLEOTIDE SEQUENCE [GENOMIC DNA]</scope>
</reference>
<proteinExistence type="inferred from homology"/>
<accession>P22929</accession>
<sequence>MLFSKSLLLSVLASLSFAAPVEKREKTLTLDFDVKRISSKAKNVTVASSPGFRRNLRAASDAGVTISLENEYSFYLTTIEIGTPGQKLQVDVDTGSSDLWVPGQGTSSLYGTYDHTKSTSYKKDRSGFSISYGDGSSARGDWAQETVSIGGASITGLEFGDATSQDVGQGLLGIGLKGNEASAQSSNSFTYDNLPLKLKDQGLIDKAAYSLYLNSEDATSGSILFGGSDSSKYSGSLATLDLVNIDDEGDSTSGAVAFFVELEGIEAGSSSITKTTYPALLDSGTTLIYAPSSIASSIGREYGTYSYSYGGYVTSCDATGPDFKFSFNGKTITVPFSNLLFQNSEGDSECLVGVLSSGSNYYILGDAFLRSAYVYYDIDNSQVGIAQAKY</sequence>
<feature type="signal peptide" evidence="1">
    <location>
        <begin position="1"/>
        <end position="18"/>
    </location>
</feature>
<feature type="chain" id="PRO_0000025847" description="Acid protease">
    <location>
        <begin position="19"/>
        <end position="390"/>
    </location>
</feature>
<feature type="domain" description="Peptidase A1" evidence="2">
    <location>
        <begin position="75"/>
        <end position="386"/>
    </location>
</feature>
<feature type="active site" evidence="3">
    <location>
        <position position="93"/>
    </location>
</feature>
<feature type="active site" evidence="3">
    <location>
        <position position="282"/>
    </location>
</feature>
<organism>
    <name type="scientific">Saccharomycopsis fibuligera</name>
    <name type="common">Yeast</name>
    <dbReference type="NCBI Taxonomy" id="4944"/>
    <lineage>
        <taxon>Eukaryota</taxon>
        <taxon>Fungi</taxon>
        <taxon>Dikarya</taxon>
        <taxon>Ascomycota</taxon>
        <taxon>Saccharomycotina</taxon>
        <taxon>Saccharomycetes</taxon>
        <taxon>Saccharomycopsidaceae</taxon>
        <taxon>Saccharomycopsis</taxon>
    </lineage>
</organism>
<protein>
    <recommendedName>
        <fullName>Acid protease</fullName>
        <ecNumber>3.4.23.-</ecNumber>
    </recommendedName>
</protein>
<comment type="similarity">
    <text evidence="4">Belongs to the peptidase A1 family.</text>
</comment>
<dbReference type="EC" id="3.4.23.-"/>
<dbReference type="EMBL" id="D00313">
    <property type="protein sequence ID" value="BAA00215.1"/>
    <property type="molecule type" value="Genomic_DNA"/>
</dbReference>
<dbReference type="PIR" id="JT0334">
    <property type="entry name" value="JT0334"/>
</dbReference>
<dbReference type="SMR" id="P22929"/>
<dbReference type="GO" id="GO:0071944">
    <property type="term" value="C:cell periphery"/>
    <property type="evidence" value="ECO:0007669"/>
    <property type="project" value="UniProtKB-ARBA"/>
</dbReference>
<dbReference type="GO" id="GO:0004190">
    <property type="term" value="F:aspartic-type endopeptidase activity"/>
    <property type="evidence" value="ECO:0007669"/>
    <property type="project" value="UniProtKB-KW"/>
</dbReference>
<dbReference type="GO" id="GO:0006508">
    <property type="term" value="P:proteolysis"/>
    <property type="evidence" value="ECO:0007669"/>
    <property type="project" value="UniProtKB-KW"/>
</dbReference>
<dbReference type="CDD" id="cd05474">
    <property type="entry name" value="SAP_like"/>
    <property type="match status" value="1"/>
</dbReference>
<dbReference type="FunFam" id="2.40.70.10:FF:000011">
    <property type="entry name" value="Aspartic protease"/>
    <property type="match status" value="1"/>
</dbReference>
<dbReference type="Gene3D" id="2.40.70.10">
    <property type="entry name" value="Acid Proteases"/>
    <property type="match status" value="2"/>
</dbReference>
<dbReference type="InterPro" id="IPR001461">
    <property type="entry name" value="Aspartic_peptidase_A1"/>
</dbReference>
<dbReference type="InterPro" id="IPR001969">
    <property type="entry name" value="Aspartic_peptidase_AS"/>
</dbReference>
<dbReference type="InterPro" id="IPR033121">
    <property type="entry name" value="PEPTIDASE_A1"/>
</dbReference>
<dbReference type="InterPro" id="IPR021109">
    <property type="entry name" value="Peptidase_aspartic_dom_sf"/>
</dbReference>
<dbReference type="InterPro" id="IPR033876">
    <property type="entry name" value="SAP-like"/>
</dbReference>
<dbReference type="PANTHER" id="PTHR47966:SF65">
    <property type="entry name" value="ASPARTIC-TYPE ENDOPEPTIDASE"/>
    <property type="match status" value="1"/>
</dbReference>
<dbReference type="PANTHER" id="PTHR47966">
    <property type="entry name" value="BETA-SITE APP-CLEAVING ENZYME, ISOFORM A-RELATED"/>
    <property type="match status" value="1"/>
</dbReference>
<dbReference type="Pfam" id="PF00026">
    <property type="entry name" value="Asp"/>
    <property type="match status" value="1"/>
</dbReference>
<dbReference type="PRINTS" id="PR00792">
    <property type="entry name" value="PEPSIN"/>
</dbReference>
<dbReference type="SUPFAM" id="SSF50630">
    <property type="entry name" value="Acid proteases"/>
    <property type="match status" value="1"/>
</dbReference>
<dbReference type="PROSITE" id="PS00141">
    <property type="entry name" value="ASP_PROTEASE"/>
    <property type="match status" value="2"/>
</dbReference>
<dbReference type="PROSITE" id="PS51767">
    <property type="entry name" value="PEPTIDASE_A1"/>
    <property type="match status" value="1"/>
</dbReference>
<evidence type="ECO:0000255" key="1"/>
<evidence type="ECO:0000255" key="2">
    <source>
        <dbReference type="PROSITE-ProRule" id="PRU01103"/>
    </source>
</evidence>
<evidence type="ECO:0000255" key="3">
    <source>
        <dbReference type="PROSITE-ProRule" id="PRU10094"/>
    </source>
</evidence>
<evidence type="ECO:0000305" key="4"/>
<name>CARP_SACFI</name>
<gene>
    <name type="primary">PEP1</name>
</gene>
<keyword id="KW-0064">Aspartyl protease</keyword>
<keyword id="KW-0378">Hydrolase</keyword>
<keyword id="KW-0645">Protease</keyword>
<keyword id="KW-0732">Signal</keyword>